<name>REX_GEOSW</name>
<evidence type="ECO:0000255" key="1">
    <source>
        <dbReference type="HAMAP-Rule" id="MF_01131"/>
    </source>
</evidence>
<accession>C5D4E7</accession>
<keyword id="KW-0963">Cytoplasm</keyword>
<keyword id="KW-0238">DNA-binding</keyword>
<keyword id="KW-0520">NAD</keyword>
<keyword id="KW-0678">Repressor</keyword>
<keyword id="KW-0804">Transcription</keyword>
<keyword id="KW-0805">Transcription regulation</keyword>
<organism>
    <name type="scientific">Geobacillus sp. (strain WCH70)</name>
    <dbReference type="NCBI Taxonomy" id="471223"/>
    <lineage>
        <taxon>Bacteria</taxon>
        <taxon>Bacillati</taxon>
        <taxon>Bacillota</taxon>
        <taxon>Bacilli</taxon>
        <taxon>Bacillales</taxon>
        <taxon>Anoxybacillaceae</taxon>
        <taxon>Geobacillus</taxon>
    </lineage>
</organism>
<sequence length="215" mass="24255">MNNEQPKIPQATAKRLPLYYRFLKNLHASGKQRVSSAELSEAVKVDPATIRRDFSYFGALGKKGYGYNVNYLLSFFRKTLDQDEITEVALFGVGNLGTAFLNYNFTKNNNTKIVMAFDVDQKKVGKEVGGVPVYHLDELENRLHEGIPVAILTVPAPAAQWITDRLVQKGIKGILNFTPARLNVPKHIRVHHIDLAVELQSLVYFLTVDEHFSLQ</sequence>
<reference key="1">
    <citation type="submission" date="2009-06" db="EMBL/GenBank/DDBJ databases">
        <title>Complete sequence of chromosome of Geopacillus sp. WCH70.</title>
        <authorList>
            <consortium name="US DOE Joint Genome Institute"/>
            <person name="Lucas S."/>
            <person name="Copeland A."/>
            <person name="Lapidus A."/>
            <person name="Glavina del Rio T."/>
            <person name="Dalin E."/>
            <person name="Tice H."/>
            <person name="Bruce D."/>
            <person name="Goodwin L."/>
            <person name="Pitluck S."/>
            <person name="Chertkov O."/>
            <person name="Brettin T."/>
            <person name="Detter J.C."/>
            <person name="Han C."/>
            <person name="Larimer F."/>
            <person name="Land M."/>
            <person name="Hauser L."/>
            <person name="Kyrpides N."/>
            <person name="Mikhailova N."/>
            <person name="Brumm P."/>
            <person name="Mead D.A."/>
            <person name="Richardson P."/>
        </authorList>
    </citation>
    <scope>NUCLEOTIDE SEQUENCE [LARGE SCALE GENOMIC DNA]</scope>
    <source>
        <strain>WCH70</strain>
    </source>
</reference>
<comment type="function">
    <text evidence="1">Modulates transcription in response to changes in cellular NADH/NAD(+) redox state.</text>
</comment>
<comment type="subunit">
    <text evidence="1">Homodimer.</text>
</comment>
<comment type="subcellular location">
    <subcellularLocation>
        <location evidence="1">Cytoplasm</location>
    </subcellularLocation>
</comment>
<comment type="similarity">
    <text evidence="1">Belongs to the transcriptional regulatory Rex family.</text>
</comment>
<gene>
    <name evidence="1" type="primary">rex</name>
    <name type="ordered locus">GWCH70_0224</name>
</gene>
<proteinExistence type="inferred from homology"/>
<protein>
    <recommendedName>
        <fullName evidence="1">Redox-sensing transcriptional repressor Rex</fullName>
    </recommendedName>
</protein>
<feature type="chain" id="PRO_1000213638" description="Redox-sensing transcriptional repressor Rex">
    <location>
        <begin position="1"/>
        <end position="215"/>
    </location>
</feature>
<feature type="DNA-binding region" description="H-T-H motif" evidence="1">
    <location>
        <begin position="18"/>
        <end position="57"/>
    </location>
</feature>
<feature type="binding site" evidence="1">
    <location>
        <begin position="92"/>
        <end position="97"/>
    </location>
    <ligand>
        <name>NAD(+)</name>
        <dbReference type="ChEBI" id="CHEBI:57540"/>
    </ligand>
</feature>
<dbReference type="EMBL" id="CP001638">
    <property type="protein sequence ID" value="ACS23155.1"/>
    <property type="molecule type" value="Genomic_DNA"/>
</dbReference>
<dbReference type="SMR" id="C5D4E7"/>
<dbReference type="STRING" id="471223.GWCH70_0224"/>
<dbReference type="KEGG" id="gwc:GWCH70_0224"/>
<dbReference type="eggNOG" id="COG2344">
    <property type="taxonomic scope" value="Bacteria"/>
</dbReference>
<dbReference type="HOGENOM" id="CLU_061534_1_1_9"/>
<dbReference type="OrthoDB" id="9784760at2"/>
<dbReference type="GO" id="GO:0005737">
    <property type="term" value="C:cytoplasm"/>
    <property type="evidence" value="ECO:0007669"/>
    <property type="project" value="UniProtKB-SubCell"/>
</dbReference>
<dbReference type="GO" id="GO:0003677">
    <property type="term" value="F:DNA binding"/>
    <property type="evidence" value="ECO:0007669"/>
    <property type="project" value="UniProtKB-UniRule"/>
</dbReference>
<dbReference type="GO" id="GO:0003700">
    <property type="term" value="F:DNA-binding transcription factor activity"/>
    <property type="evidence" value="ECO:0007669"/>
    <property type="project" value="UniProtKB-UniRule"/>
</dbReference>
<dbReference type="GO" id="GO:0045892">
    <property type="term" value="P:negative regulation of DNA-templated transcription"/>
    <property type="evidence" value="ECO:0007669"/>
    <property type="project" value="InterPro"/>
</dbReference>
<dbReference type="GO" id="GO:0051775">
    <property type="term" value="P:response to redox state"/>
    <property type="evidence" value="ECO:0007669"/>
    <property type="project" value="InterPro"/>
</dbReference>
<dbReference type="Gene3D" id="3.40.50.720">
    <property type="entry name" value="NAD(P)-binding Rossmann-like Domain"/>
    <property type="match status" value="1"/>
</dbReference>
<dbReference type="Gene3D" id="1.10.10.10">
    <property type="entry name" value="Winged helix-like DNA-binding domain superfamily/Winged helix DNA-binding domain"/>
    <property type="match status" value="1"/>
</dbReference>
<dbReference type="HAMAP" id="MF_01131">
    <property type="entry name" value="Rex"/>
    <property type="match status" value="1"/>
</dbReference>
<dbReference type="InterPro" id="IPR003781">
    <property type="entry name" value="CoA-bd"/>
</dbReference>
<dbReference type="InterPro" id="IPR036291">
    <property type="entry name" value="NAD(P)-bd_dom_sf"/>
</dbReference>
<dbReference type="InterPro" id="IPR009718">
    <property type="entry name" value="Rex_DNA-bd_C_dom"/>
</dbReference>
<dbReference type="InterPro" id="IPR022876">
    <property type="entry name" value="Tscrpt_rep_Rex"/>
</dbReference>
<dbReference type="InterPro" id="IPR036388">
    <property type="entry name" value="WH-like_DNA-bd_sf"/>
</dbReference>
<dbReference type="InterPro" id="IPR036390">
    <property type="entry name" value="WH_DNA-bd_sf"/>
</dbReference>
<dbReference type="NCBIfam" id="NF003989">
    <property type="entry name" value="PRK05472.1-3"/>
    <property type="match status" value="1"/>
</dbReference>
<dbReference type="NCBIfam" id="NF003991">
    <property type="entry name" value="PRK05472.1-5"/>
    <property type="match status" value="1"/>
</dbReference>
<dbReference type="NCBIfam" id="NF003994">
    <property type="entry name" value="PRK05472.2-3"/>
    <property type="match status" value="1"/>
</dbReference>
<dbReference type="NCBIfam" id="NF003995">
    <property type="entry name" value="PRK05472.2-4"/>
    <property type="match status" value="1"/>
</dbReference>
<dbReference type="NCBIfam" id="NF003996">
    <property type="entry name" value="PRK05472.2-5"/>
    <property type="match status" value="1"/>
</dbReference>
<dbReference type="PANTHER" id="PTHR35786">
    <property type="entry name" value="REDOX-SENSING TRANSCRIPTIONAL REPRESSOR REX"/>
    <property type="match status" value="1"/>
</dbReference>
<dbReference type="PANTHER" id="PTHR35786:SF1">
    <property type="entry name" value="REDOX-SENSING TRANSCRIPTIONAL REPRESSOR REX 1"/>
    <property type="match status" value="1"/>
</dbReference>
<dbReference type="Pfam" id="PF02629">
    <property type="entry name" value="CoA_binding"/>
    <property type="match status" value="1"/>
</dbReference>
<dbReference type="Pfam" id="PF06971">
    <property type="entry name" value="Put_DNA-bind_N"/>
    <property type="match status" value="1"/>
</dbReference>
<dbReference type="SMART" id="SM00881">
    <property type="entry name" value="CoA_binding"/>
    <property type="match status" value="1"/>
</dbReference>
<dbReference type="SUPFAM" id="SSF51735">
    <property type="entry name" value="NAD(P)-binding Rossmann-fold domains"/>
    <property type="match status" value="1"/>
</dbReference>
<dbReference type="SUPFAM" id="SSF46785">
    <property type="entry name" value="Winged helix' DNA-binding domain"/>
    <property type="match status" value="1"/>
</dbReference>